<geneLocation type="organellar chromatophore"/>
<name>NDHJ_PAUCH</name>
<evidence type="ECO:0000250" key="1"/>
<evidence type="ECO:0000255" key="2">
    <source>
        <dbReference type="HAMAP-Rule" id="MF_01357"/>
    </source>
</evidence>
<accession>B1X4R3</accession>
<organism>
    <name type="scientific">Paulinella chromatophora</name>
    <dbReference type="NCBI Taxonomy" id="39717"/>
    <lineage>
        <taxon>Eukaryota</taxon>
        <taxon>Sar</taxon>
        <taxon>Rhizaria</taxon>
        <taxon>Cercozoa</taxon>
        <taxon>Imbricatea</taxon>
        <taxon>Silicofilosea</taxon>
        <taxon>Euglyphida</taxon>
        <taxon>Paulinellidae</taxon>
        <taxon>Paulinella</taxon>
    </lineage>
</organism>
<feature type="chain" id="PRO_0000358310" description="NAD(P)H-quinone oxidoreductase subunit J, organellar chromatophore">
    <location>
        <begin position="1"/>
        <end position="192"/>
    </location>
</feature>
<sequence>MIEPSIIPVLVENTEEKTFKFQPGQVSQWLTGQGLQHQILEPDLLGVELIGVEPSELQKIAEALKSNGFDYLQCQGGYDEGPGGRLVSFYHLIKLGTIADHYLTPNTLPPNSILKEVRLKVFLLRDGNLSVPSLYSIFRGSDWQERETFDMFGISYEGHPHPKRLLMPEDWKGYPLRKDYIQPDFYEMQVAY</sequence>
<dbReference type="EC" id="7.1.1.-" evidence="2"/>
<dbReference type="EMBL" id="CP000815">
    <property type="protein sequence ID" value="ACB42932.1"/>
    <property type="molecule type" value="Genomic_DNA"/>
</dbReference>
<dbReference type="RefSeq" id="YP_002049142.1">
    <property type="nucleotide sequence ID" value="NC_011087.1"/>
</dbReference>
<dbReference type="SMR" id="B1X4R3"/>
<dbReference type="GeneID" id="6481480"/>
<dbReference type="GO" id="GO:0070118">
    <property type="term" value="C:organellar chromatophore thylakoid membrane"/>
    <property type="evidence" value="ECO:0007669"/>
    <property type="project" value="UniProtKB-SubCell"/>
</dbReference>
<dbReference type="GO" id="GO:0005886">
    <property type="term" value="C:plasma membrane"/>
    <property type="evidence" value="ECO:0007669"/>
    <property type="project" value="UniProtKB-UniRule"/>
</dbReference>
<dbReference type="GO" id="GO:0009536">
    <property type="term" value="C:plastid"/>
    <property type="evidence" value="ECO:0007669"/>
    <property type="project" value="UniProtKB-KW"/>
</dbReference>
<dbReference type="GO" id="GO:0008137">
    <property type="term" value="F:NADH dehydrogenase (ubiquinone) activity"/>
    <property type="evidence" value="ECO:0007669"/>
    <property type="project" value="InterPro"/>
</dbReference>
<dbReference type="GO" id="GO:0050136">
    <property type="term" value="F:NADH:ubiquinone reductase (non-electrogenic) activity"/>
    <property type="evidence" value="ECO:0007669"/>
    <property type="project" value="UniProtKB-UniRule"/>
</dbReference>
<dbReference type="GO" id="GO:0048038">
    <property type="term" value="F:quinone binding"/>
    <property type="evidence" value="ECO:0007669"/>
    <property type="project" value="UniProtKB-KW"/>
</dbReference>
<dbReference type="Gene3D" id="3.30.460.80">
    <property type="entry name" value="NADH:ubiquinone oxidoreductase, 30kDa subunit"/>
    <property type="match status" value="1"/>
</dbReference>
<dbReference type="HAMAP" id="MF_01357">
    <property type="entry name" value="NDH1_NuoC"/>
    <property type="match status" value="1"/>
</dbReference>
<dbReference type="InterPro" id="IPR010218">
    <property type="entry name" value="NADH_DH_suC"/>
</dbReference>
<dbReference type="InterPro" id="IPR037232">
    <property type="entry name" value="NADH_quin_OxRdtase_su_C/D-like"/>
</dbReference>
<dbReference type="InterPro" id="IPR001268">
    <property type="entry name" value="NADH_UbQ_OxRdtase_30kDa_su"/>
</dbReference>
<dbReference type="InterPro" id="IPR020396">
    <property type="entry name" value="NADH_UbQ_OxRdtase_CS"/>
</dbReference>
<dbReference type="NCBIfam" id="NF009141">
    <property type="entry name" value="PRK12494.1"/>
    <property type="match status" value="1"/>
</dbReference>
<dbReference type="PANTHER" id="PTHR10884:SF14">
    <property type="entry name" value="NADH DEHYDROGENASE [UBIQUINONE] IRON-SULFUR PROTEIN 3, MITOCHONDRIAL"/>
    <property type="match status" value="1"/>
</dbReference>
<dbReference type="PANTHER" id="PTHR10884">
    <property type="entry name" value="NADH DEHYDROGENASE UBIQUINONE IRON-SULFUR PROTEIN 3"/>
    <property type="match status" value="1"/>
</dbReference>
<dbReference type="Pfam" id="PF00329">
    <property type="entry name" value="Complex1_30kDa"/>
    <property type="match status" value="1"/>
</dbReference>
<dbReference type="SUPFAM" id="SSF143243">
    <property type="entry name" value="Nqo5-like"/>
    <property type="match status" value="1"/>
</dbReference>
<dbReference type="PROSITE" id="PS00542">
    <property type="entry name" value="COMPLEX1_30K"/>
    <property type="match status" value="1"/>
</dbReference>
<comment type="function">
    <text evidence="1">NDH-1 shuttles electrons from NADH, via FMN and iron-sulfur (Fe-S) centers, to quinones in the respiratory chain. Couples the redox reaction to proton translocation (for every two electrons transferred, four hydrogen ions are translocated across the cytoplasmic membrane), and thus conserves the redox energy in a proton gradient (By similarity).</text>
</comment>
<comment type="catalytic activity">
    <reaction evidence="2">
        <text>a quinone + NADH + H(+) = a quinol + NAD(+)</text>
        <dbReference type="Rhea" id="RHEA:46160"/>
        <dbReference type="ChEBI" id="CHEBI:15378"/>
        <dbReference type="ChEBI" id="CHEBI:24646"/>
        <dbReference type="ChEBI" id="CHEBI:57540"/>
        <dbReference type="ChEBI" id="CHEBI:57945"/>
        <dbReference type="ChEBI" id="CHEBI:132124"/>
    </reaction>
</comment>
<comment type="subunit">
    <text evidence="2">NDH is composed of at least 16 different subunits, 5 of which are encoded in the nucleus.</text>
</comment>
<comment type="subcellular location">
    <subcellularLocation>
        <location evidence="1">Plastid</location>
        <location evidence="1">Organellar chromatophore thylakoid membrane</location>
        <topology evidence="2">Peripheral membrane protein</topology>
        <orientation evidence="2">Stromal side</orientation>
    </subcellularLocation>
</comment>
<comment type="similarity">
    <text evidence="2">Belongs to the complex I 30 kDa subunit family.</text>
</comment>
<keyword id="KW-0472">Membrane</keyword>
<keyword id="KW-0520">NAD</keyword>
<keyword id="KW-0521">NADP</keyword>
<keyword id="KW-0994">Organellar chromatophore</keyword>
<keyword id="KW-0934">Plastid</keyword>
<keyword id="KW-0618">Plastoquinone</keyword>
<keyword id="KW-0874">Quinone</keyword>
<keyword id="KW-0793">Thylakoid</keyword>
<keyword id="KW-1278">Translocase</keyword>
<keyword id="KW-0813">Transport</keyword>
<gene>
    <name evidence="2" type="primary">ndhJ</name>
    <name type="ordered locus">PCC_0496</name>
</gene>
<reference key="1">
    <citation type="journal article" date="2008" name="Curr. Biol.">
        <title>Chromatophore genome sequence of Paulinella sheds light on acquisition of photosynthesis by eukaryotes.</title>
        <authorList>
            <person name="Nowack E.C.M."/>
            <person name="Melkonian M."/>
            <person name="Gloeckner G."/>
        </authorList>
    </citation>
    <scope>NUCLEOTIDE SEQUENCE [LARGE SCALE GENOMIC DNA]</scope>
</reference>
<proteinExistence type="inferred from homology"/>
<protein>
    <recommendedName>
        <fullName evidence="2">NAD(P)H-quinone oxidoreductase subunit J, organellar chromatophore</fullName>
        <ecNumber evidence="2">7.1.1.-</ecNumber>
    </recommendedName>
    <alternativeName>
        <fullName>NAD(P)H dehydrogenase subunit J</fullName>
    </alternativeName>
    <alternativeName>
        <fullName evidence="2">NADH-plastoquinone oxidoreductase subunit J</fullName>
    </alternativeName>
</protein>